<feature type="transit peptide" description="Mitochondrion" evidence="2">
    <location>
        <begin position="1"/>
        <end status="unknown"/>
    </location>
</feature>
<feature type="chain" id="PRO_0000405632" description="ATPase expression protein 2, mitochondrial">
    <location>
        <begin status="unknown"/>
        <end position="551"/>
    </location>
</feature>
<feature type="region of interest" description="Disordered" evidence="3">
    <location>
        <begin position="530"/>
        <end position="551"/>
    </location>
</feature>
<accession>C5DDT8</accession>
<evidence type="ECO:0000250" key="1"/>
<evidence type="ECO:0000255" key="2"/>
<evidence type="ECO:0000256" key="3">
    <source>
        <dbReference type="SAM" id="MobiDB-lite"/>
    </source>
</evidence>
<evidence type="ECO:0000305" key="4"/>
<reference key="1">
    <citation type="journal article" date="2009" name="Genome Res.">
        <title>Comparative genomics of protoploid Saccharomycetaceae.</title>
        <authorList>
            <consortium name="The Genolevures Consortium"/>
            <person name="Souciet J.-L."/>
            <person name="Dujon B."/>
            <person name="Gaillardin C."/>
            <person name="Johnston M."/>
            <person name="Baret P.V."/>
            <person name="Cliften P."/>
            <person name="Sherman D.J."/>
            <person name="Weissenbach J."/>
            <person name="Westhof E."/>
            <person name="Wincker P."/>
            <person name="Jubin C."/>
            <person name="Poulain J."/>
            <person name="Barbe V."/>
            <person name="Segurens B."/>
            <person name="Artiguenave F."/>
            <person name="Anthouard V."/>
            <person name="Vacherie B."/>
            <person name="Val M.-E."/>
            <person name="Fulton R.S."/>
            <person name="Minx P."/>
            <person name="Wilson R."/>
            <person name="Durrens P."/>
            <person name="Jean G."/>
            <person name="Marck C."/>
            <person name="Martin T."/>
            <person name="Nikolski M."/>
            <person name="Rolland T."/>
            <person name="Seret M.-L."/>
            <person name="Casaregola S."/>
            <person name="Despons L."/>
            <person name="Fairhead C."/>
            <person name="Fischer G."/>
            <person name="Lafontaine I."/>
            <person name="Leh V."/>
            <person name="Lemaire M."/>
            <person name="de Montigny J."/>
            <person name="Neuveglise C."/>
            <person name="Thierry A."/>
            <person name="Blanc-Lenfle I."/>
            <person name="Bleykasten C."/>
            <person name="Diffels J."/>
            <person name="Fritsch E."/>
            <person name="Frangeul L."/>
            <person name="Goeffon A."/>
            <person name="Jauniaux N."/>
            <person name="Kachouri-Lafond R."/>
            <person name="Payen C."/>
            <person name="Potier S."/>
            <person name="Pribylova L."/>
            <person name="Ozanne C."/>
            <person name="Richard G.-F."/>
            <person name="Sacerdot C."/>
            <person name="Straub M.-L."/>
            <person name="Talla E."/>
        </authorList>
    </citation>
    <scope>NUCLEOTIDE SEQUENCE [LARGE SCALE GENOMIC DNA]</scope>
    <source>
        <strain>ATCC 56472 / CBS 6340 / NRRL Y-8284</strain>
    </source>
</reference>
<gene>
    <name type="primary">AEP2</name>
    <name type="ordered locus">KLTH0C03718g</name>
</gene>
<proteinExistence type="inferred from homology"/>
<keyword id="KW-0496">Mitochondrion</keyword>
<keyword id="KW-1185">Reference proteome</keyword>
<keyword id="KW-0694">RNA-binding</keyword>
<keyword id="KW-0809">Transit peptide</keyword>
<keyword id="KW-0810">Translation regulation</keyword>
<name>AEP2_LACTC</name>
<organism>
    <name type="scientific">Lachancea thermotolerans (strain ATCC 56472 / CBS 6340 / NRRL Y-8284)</name>
    <name type="common">Yeast</name>
    <name type="synonym">Kluyveromyces thermotolerans</name>
    <dbReference type="NCBI Taxonomy" id="559295"/>
    <lineage>
        <taxon>Eukaryota</taxon>
        <taxon>Fungi</taxon>
        <taxon>Dikarya</taxon>
        <taxon>Ascomycota</taxon>
        <taxon>Saccharomycotina</taxon>
        <taxon>Saccharomycetes</taxon>
        <taxon>Saccharomycetales</taxon>
        <taxon>Saccharomycetaceae</taxon>
        <taxon>Lachancea</taxon>
    </lineage>
</organism>
<protein>
    <recommendedName>
        <fullName>ATPase expression protein 2, mitochondrial</fullName>
    </recommendedName>
</protein>
<dbReference type="EMBL" id="CU928167">
    <property type="protein sequence ID" value="CAR21949.1"/>
    <property type="molecule type" value="Genomic_DNA"/>
</dbReference>
<dbReference type="RefSeq" id="XP_002552387.1">
    <property type="nucleotide sequence ID" value="XM_002552341.1"/>
</dbReference>
<dbReference type="FunCoup" id="C5DDT8">
    <property type="interactions" value="52"/>
</dbReference>
<dbReference type="GeneID" id="8291251"/>
<dbReference type="KEGG" id="lth:KLTH0C03718g"/>
<dbReference type="eggNOG" id="ENOG502RX9I">
    <property type="taxonomic scope" value="Eukaryota"/>
</dbReference>
<dbReference type="HOGENOM" id="CLU_035070_0_0_1"/>
<dbReference type="InParanoid" id="C5DDT8"/>
<dbReference type="OMA" id="LQLRCGA"/>
<dbReference type="OrthoDB" id="4062665at2759"/>
<dbReference type="Proteomes" id="UP000002036">
    <property type="component" value="Chromosome C"/>
</dbReference>
<dbReference type="GO" id="GO:0005739">
    <property type="term" value="C:mitochondrion"/>
    <property type="evidence" value="ECO:0007669"/>
    <property type="project" value="UniProtKB-SubCell"/>
</dbReference>
<dbReference type="GO" id="GO:0003723">
    <property type="term" value="F:RNA binding"/>
    <property type="evidence" value="ECO:0007669"/>
    <property type="project" value="UniProtKB-KW"/>
</dbReference>
<dbReference type="GO" id="GO:0006417">
    <property type="term" value="P:regulation of translation"/>
    <property type="evidence" value="ECO:0007669"/>
    <property type="project" value="UniProtKB-KW"/>
</dbReference>
<dbReference type="InterPro" id="IPR024319">
    <property type="entry name" value="ATPase_expression_mit"/>
</dbReference>
<dbReference type="Pfam" id="PF12921">
    <property type="entry name" value="ATP13"/>
    <property type="match status" value="1"/>
</dbReference>
<comment type="function">
    <text evidence="1">Required for translation of the mitochondrial OLI1 transcript coding for the mitochondrial ATP synthase subunit 9.</text>
</comment>
<comment type="subunit">
    <text evidence="1">Binds to the 5'UTR of the OLI1 mRNA.</text>
</comment>
<comment type="subcellular location">
    <subcellularLocation>
        <location evidence="1">Mitochondrion</location>
    </subcellularLocation>
</comment>
<comment type="similarity">
    <text evidence="4">Belongs to the AEP2 family.</text>
</comment>
<sequence>MLSRKCGSLSLTLKNFNSTLSVAYSASDAALKIPIADPSENAASKYANKPAKTLNDAVRERSERFRSRVYTAKIPKLHEEQVSSGFSSPCNKLRSFLHSRDYMAFLVELTLQSRMDENFGAKMFQNNDLSIAEFSAFIEGLLSVNNLLHKLSATLPNVSGTEMVFSLYQLYLKTVTPGPLSPLQLHDFNKFIRFFIRSAQLRKAQTVLDCILKSNNNQLPCDSATATHYLQLRCGALPRNWKVLDENLGRSTRLGARKNRYQLVSHSYKALDHKSVLTFMSLLSDPKSVWFHRKSAALESAVVYSLGFMGQLKLLEEHVWRNWGISLQEHNQVTDASFTSPSSEVLVAVLTSYASNKNISSALHLIDGFMAKYPTLELDHVFWRRLFQWSTRVWSEKTDPRGELSRGCWRVMREWHAARNRQLPADAVLLNERFVVLSRTNNYRDAIEVVEQCYSSFFQKANLSRHEAVLFQKFAKLILKNMAHLGYYHKPLKFIKEWSPNKLLEHTLRAYFEKHRNAYSARKQRRTEAAQKAQKRFDDEEEDSMLLGRLW</sequence>